<keyword id="KW-0150">Chloroplast</keyword>
<keyword id="KW-0456">Lyase</keyword>
<keyword id="KW-0460">Magnesium</keyword>
<keyword id="KW-0479">Metal-binding</keyword>
<keyword id="KW-0934">Plastid</keyword>
<protein>
    <recommendedName>
        <fullName evidence="5">Germacrene A synthase</fullName>
        <shortName evidence="5">LpGEAS</shortName>
        <ecNumber evidence="4">4.2.3.-</ecNumber>
    </recommendedName>
    <alternativeName>
        <fullName evidence="5">Beta-elemene synthase</fullName>
        <ecNumber evidence="4">4.2.3.-</ecNumber>
    </alternativeName>
</protein>
<sequence length="547" mass="64111">MAQQEAEIIRPLANFSPSLWGDQFIKNDSDAKVEDKISKTIEVLKEEVKSMLTATGTKMVDTMNLIDTLERLGVSYHFEHEIEEILQQFFNLNTDYNDEAYDLYTVATHFRLFRQHGHRITCADIFGRWRDENGKFHEGLKDDAKGLLSLYEASYLRTRGETILDEALDFTTASLKSIAPNLESPLRRQVEHALVQQLHWGNPRIEARNFISLYEEYEDKDESLLRFAKLDYNLLQMMHKEELHEVSRWWKELDLVAKLPYARDRVVECFFWAMGVYHEPQYSRARVMLTKTIAMTSIIDDTYDAYGTIEELDIFTEAIERWNVEEMKRLPEYIKPFYKALLELYEQFEEELAKEGRSYATHYAIESLKELVRSYHVEAKWFIQGYLPPFEEYLKNALITCTYCYHTTTSLLGVESAVREDFEWLSKKPKMLVAGLLICRVIDDIATYEVEKDRGQIATGIESYMRDNGATKEEAITKFFEIANDAWKDINEECMRPSPHSRDVLMRILNLERIIDVTYKGNEDGYTQPEKVLKPHIIALFVDPIQI</sequence>
<reference key="1">
    <citation type="journal article" date="2015" name="Physiol. Plantarum">
        <title>Functional characterization of terpene synthases and chemotypic variation in three lavender species of section Stoechas.</title>
        <authorList>
            <person name="Benabdelkader T."/>
            <person name="Guitton Y."/>
            <person name="Pasquier B."/>
            <person name="Magnard J.L."/>
            <person name="Jullien F."/>
            <person name="Kameli A."/>
            <person name="Legendre L."/>
        </authorList>
    </citation>
    <scope>NUCLEOTIDE SEQUENCE [MRNA]</scope>
    <scope>FUNCTION</scope>
    <scope>CATALYTIC ACTIVITY</scope>
    <scope>PATHWAY</scope>
    <scope>TISSUE SPECIFICITY</scope>
    <source>
        <tissue>Leaf</tissue>
    </source>
</reference>
<proteinExistence type="evidence at protein level"/>
<evidence type="ECO:0000250" key="1">
    <source>
        <dbReference type="UniProtKB" id="A0A1C9J6A7"/>
    </source>
</evidence>
<evidence type="ECO:0000250" key="2">
    <source>
        <dbReference type="UniProtKB" id="Q40577"/>
    </source>
</evidence>
<evidence type="ECO:0000255" key="3"/>
<evidence type="ECO:0000269" key="4">
    <source>
    </source>
</evidence>
<evidence type="ECO:0000303" key="5">
    <source>
    </source>
</evidence>
<evidence type="ECO:0000305" key="6"/>
<gene>
    <name evidence="5" type="primary">GEAS</name>
</gene>
<comment type="function">
    <text evidence="4">Sesquiterpene synthase involved in the biosynthesis of volatile compounds widely used in aromatherapy and folk medicine, and present in culinary herbs (PubMed:24943828). Mediates the conversion of (2E,6E)-farnesyl diphosphate (FPP) into germacrene A and beta-elemene (PubMed:24943828). Not able to use (2E)-geranyl diphosphate (GPP) as substrate (PubMed:24943828).</text>
</comment>
<comment type="catalytic activity">
    <reaction evidence="4">
        <text>(2E,6E)-farnesyl diphosphate = germacrene A + diphosphate</text>
        <dbReference type="Rhea" id="RHEA:25452"/>
        <dbReference type="ChEBI" id="CHEBI:33019"/>
        <dbReference type="ChEBI" id="CHEBI:36517"/>
        <dbReference type="ChEBI" id="CHEBI:175763"/>
    </reaction>
    <physiologicalReaction direction="left-to-right" evidence="4">
        <dbReference type="Rhea" id="RHEA:25453"/>
    </physiologicalReaction>
</comment>
<comment type="catalytic activity">
    <reaction evidence="4">
        <text>(2E,6E)-farnesyl diphosphate = (1S,2S,4R)-beta-elemene + diphosphate</text>
        <dbReference type="Rhea" id="RHEA:68712"/>
        <dbReference type="ChEBI" id="CHEBI:33019"/>
        <dbReference type="ChEBI" id="CHEBI:62855"/>
        <dbReference type="ChEBI" id="CHEBI:175763"/>
    </reaction>
    <physiologicalReaction direction="left-to-right" evidence="4">
        <dbReference type="Rhea" id="RHEA:68713"/>
    </physiologicalReaction>
</comment>
<comment type="cofactor">
    <cofactor evidence="1">
        <name>Mg(2+)</name>
        <dbReference type="ChEBI" id="CHEBI:18420"/>
    </cofactor>
    <cofactor evidence="1">
        <name>Mn(2+)</name>
        <dbReference type="ChEBI" id="CHEBI:29035"/>
    </cofactor>
    <text evidence="1">Binds 3 Mg(2+) or Mn(2+) ions per subunit.</text>
</comment>
<comment type="pathway">
    <text evidence="4">Secondary metabolite biosynthesis; terpenoid biosynthesis.</text>
</comment>
<comment type="subcellular location">
    <subcellularLocation>
        <location evidence="3">Plastid</location>
        <location evidence="3">Chloroplast</location>
    </subcellularLocation>
</comment>
<comment type="tissue specificity">
    <text evidence="4">Expressed in leaves.</text>
</comment>
<comment type="domain">
    <text evidence="2">The Asp-Asp-Xaa-Xaa-Asp/Glu (DDXXD/E) motif is important for the catalytic activity, presumably through binding to Mg(2+).</text>
</comment>
<comment type="similarity">
    <text evidence="6">Belongs to the terpene synthase family. Tpsa subfamily.</text>
</comment>
<organism>
    <name type="scientific">Lavandula pedunculata subsp. lusitanica</name>
    <name type="common">French lavender</name>
    <dbReference type="NCBI Taxonomy" id="1343917"/>
    <lineage>
        <taxon>Eukaryota</taxon>
        <taxon>Viridiplantae</taxon>
        <taxon>Streptophyta</taxon>
        <taxon>Embryophyta</taxon>
        <taxon>Tracheophyta</taxon>
        <taxon>Spermatophyta</taxon>
        <taxon>Magnoliopsida</taxon>
        <taxon>eudicotyledons</taxon>
        <taxon>Gunneridae</taxon>
        <taxon>Pentapetalae</taxon>
        <taxon>asterids</taxon>
        <taxon>lamiids</taxon>
        <taxon>Lamiales</taxon>
        <taxon>Lamiaceae</taxon>
        <taxon>Nepetoideae</taxon>
        <taxon>Ocimeae</taxon>
        <taxon>Lavandulinae</taxon>
        <taxon>Lavandula</taxon>
    </lineage>
</organism>
<feature type="chain" id="PRO_0000454962" description="Germacrene A synthase">
    <location>
        <begin position="1"/>
        <end position="547"/>
    </location>
</feature>
<feature type="short sequence motif" description="DDXXD motif" evidence="1">
    <location>
        <begin position="300"/>
        <end position="304"/>
    </location>
</feature>
<feature type="binding site" evidence="2">
    <location>
        <position position="300"/>
    </location>
    <ligand>
        <name>Mg(2+)</name>
        <dbReference type="ChEBI" id="CHEBI:18420"/>
        <label>1</label>
    </ligand>
</feature>
<feature type="binding site" evidence="2">
    <location>
        <position position="300"/>
    </location>
    <ligand>
        <name>Mg(2+)</name>
        <dbReference type="ChEBI" id="CHEBI:18420"/>
        <label>2</label>
    </ligand>
</feature>
<feature type="binding site" evidence="2">
    <location>
        <position position="304"/>
    </location>
    <ligand>
        <name>Mg(2+)</name>
        <dbReference type="ChEBI" id="CHEBI:18420"/>
        <label>1</label>
    </ligand>
</feature>
<feature type="binding site" evidence="2">
    <location>
        <position position="304"/>
    </location>
    <ligand>
        <name>Mg(2+)</name>
        <dbReference type="ChEBI" id="CHEBI:18420"/>
        <label>2</label>
    </ligand>
</feature>
<feature type="binding site" evidence="2">
    <location>
        <position position="443"/>
    </location>
    <ligand>
        <name>Mg(2+)</name>
        <dbReference type="ChEBI" id="CHEBI:18420"/>
        <label>3</label>
    </ligand>
</feature>
<feature type="binding site" evidence="2">
    <location>
        <position position="451"/>
    </location>
    <ligand>
        <name>Mg(2+)</name>
        <dbReference type="ChEBI" id="CHEBI:18420"/>
        <label>3</label>
    </ligand>
</feature>
<accession>T1RRI5</accession>
<name>GEAS_LAVPL</name>
<dbReference type="EC" id="4.2.3.-" evidence="4"/>
<dbReference type="EMBL" id="JX501513">
    <property type="protein sequence ID" value="AGN72800.1"/>
    <property type="molecule type" value="mRNA"/>
</dbReference>
<dbReference type="SMR" id="T1RRI5"/>
<dbReference type="BRENDA" id="4.2.3.23">
    <property type="organism ID" value="13954"/>
</dbReference>
<dbReference type="UniPathway" id="UPA00213"/>
<dbReference type="GO" id="GO:0009507">
    <property type="term" value="C:chloroplast"/>
    <property type="evidence" value="ECO:0007669"/>
    <property type="project" value="UniProtKB-SubCell"/>
</dbReference>
<dbReference type="GO" id="GO:0102889">
    <property type="term" value="F:beta-elemene synthase activity"/>
    <property type="evidence" value="ECO:0000314"/>
    <property type="project" value="UniProtKB"/>
</dbReference>
<dbReference type="GO" id="GO:0034005">
    <property type="term" value="F:germacrene-A synthase activity"/>
    <property type="evidence" value="ECO:0000314"/>
    <property type="project" value="UniProtKB"/>
</dbReference>
<dbReference type="GO" id="GO:0016829">
    <property type="term" value="F:lyase activity"/>
    <property type="evidence" value="ECO:0000314"/>
    <property type="project" value="UniProtKB"/>
</dbReference>
<dbReference type="GO" id="GO:0000287">
    <property type="term" value="F:magnesium ion binding"/>
    <property type="evidence" value="ECO:0007669"/>
    <property type="project" value="InterPro"/>
</dbReference>
<dbReference type="GO" id="GO:0010333">
    <property type="term" value="F:terpene synthase activity"/>
    <property type="evidence" value="ECO:0000314"/>
    <property type="project" value="UniProtKB"/>
</dbReference>
<dbReference type="GO" id="GO:0016102">
    <property type="term" value="P:diterpenoid biosynthetic process"/>
    <property type="evidence" value="ECO:0007669"/>
    <property type="project" value="InterPro"/>
</dbReference>
<dbReference type="GO" id="GO:0010597">
    <property type="term" value="P:green leaf volatile biosynthetic process"/>
    <property type="evidence" value="ECO:0000314"/>
    <property type="project" value="UniProtKB"/>
</dbReference>
<dbReference type="GO" id="GO:0051762">
    <property type="term" value="P:sesquiterpene biosynthetic process"/>
    <property type="evidence" value="ECO:0000314"/>
    <property type="project" value="UniProtKB"/>
</dbReference>
<dbReference type="CDD" id="cd00684">
    <property type="entry name" value="Terpene_cyclase_plant_C1"/>
    <property type="match status" value="1"/>
</dbReference>
<dbReference type="FunFam" id="1.10.600.10:FF:000007">
    <property type="entry name" value="Isoprene synthase, chloroplastic"/>
    <property type="match status" value="1"/>
</dbReference>
<dbReference type="FunFam" id="1.50.10.130:FF:000001">
    <property type="entry name" value="Isoprene synthase, chloroplastic"/>
    <property type="match status" value="1"/>
</dbReference>
<dbReference type="Gene3D" id="1.10.600.10">
    <property type="entry name" value="Farnesyl Diphosphate Synthase"/>
    <property type="match status" value="1"/>
</dbReference>
<dbReference type="Gene3D" id="1.50.10.130">
    <property type="entry name" value="Terpene synthase, N-terminal domain"/>
    <property type="match status" value="1"/>
</dbReference>
<dbReference type="InterPro" id="IPR008949">
    <property type="entry name" value="Isoprenoid_synthase_dom_sf"/>
</dbReference>
<dbReference type="InterPro" id="IPR034741">
    <property type="entry name" value="Terpene_cyclase-like_1_C"/>
</dbReference>
<dbReference type="InterPro" id="IPR044814">
    <property type="entry name" value="Terpene_cyclase_plant_C1"/>
</dbReference>
<dbReference type="InterPro" id="IPR001906">
    <property type="entry name" value="Terpene_synth_N"/>
</dbReference>
<dbReference type="InterPro" id="IPR036965">
    <property type="entry name" value="Terpene_synth_N_sf"/>
</dbReference>
<dbReference type="InterPro" id="IPR050148">
    <property type="entry name" value="Terpene_synthase-like"/>
</dbReference>
<dbReference type="InterPro" id="IPR005630">
    <property type="entry name" value="Terpene_synthase_metal-bd"/>
</dbReference>
<dbReference type="InterPro" id="IPR008930">
    <property type="entry name" value="Terpenoid_cyclase/PrenylTrfase"/>
</dbReference>
<dbReference type="PANTHER" id="PTHR31225:SF93">
    <property type="entry name" value="ALPHA-HUMULENE_(-)-(E)-BETA-CARYOPHYLLENE SYNTHASE"/>
    <property type="match status" value="1"/>
</dbReference>
<dbReference type="PANTHER" id="PTHR31225">
    <property type="entry name" value="OS04G0344100 PROTEIN-RELATED"/>
    <property type="match status" value="1"/>
</dbReference>
<dbReference type="Pfam" id="PF01397">
    <property type="entry name" value="Terpene_synth"/>
    <property type="match status" value="1"/>
</dbReference>
<dbReference type="Pfam" id="PF03936">
    <property type="entry name" value="Terpene_synth_C"/>
    <property type="match status" value="1"/>
</dbReference>
<dbReference type="SFLD" id="SFLDS00005">
    <property type="entry name" value="Isoprenoid_Synthase_Type_I"/>
    <property type="match status" value="1"/>
</dbReference>
<dbReference type="SFLD" id="SFLDG01019">
    <property type="entry name" value="Terpene_Cyclase_Like_1_C_Termi"/>
    <property type="match status" value="1"/>
</dbReference>
<dbReference type="SUPFAM" id="SSF48239">
    <property type="entry name" value="Terpenoid cyclases/Protein prenyltransferases"/>
    <property type="match status" value="1"/>
</dbReference>
<dbReference type="SUPFAM" id="SSF48576">
    <property type="entry name" value="Terpenoid synthases"/>
    <property type="match status" value="1"/>
</dbReference>